<keyword id="KW-0067">ATP-binding</keyword>
<keyword id="KW-0436">Ligase</keyword>
<keyword id="KW-0547">Nucleotide-binding</keyword>
<keyword id="KW-0658">Purine biosynthesis</keyword>
<organism>
    <name type="scientific">Streptococcus equi subsp. zooepidemicus (strain H70)</name>
    <dbReference type="NCBI Taxonomy" id="553483"/>
    <lineage>
        <taxon>Bacteria</taxon>
        <taxon>Bacillati</taxon>
        <taxon>Bacillota</taxon>
        <taxon>Bacilli</taxon>
        <taxon>Lactobacillales</taxon>
        <taxon>Streptococcaceae</taxon>
        <taxon>Streptococcus</taxon>
    </lineage>
</organism>
<comment type="catalytic activity">
    <reaction evidence="1">
        <text>5-amino-1-(5-phospho-D-ribosyl)imidazole-4-carboxylate + L-aspartate + ATP = (2S)-2-[5-amino-1-(5-phospho-beta-D-ribosyl)imidazole-4-carboxamido]succinate + ADP + phosphate + 2 H(+)</text>
        <dbReference type="Rhea" id="RHEA:22628"/>
        <dbReference type="ChEBI" id="CHEBI:15378"/>
        <dbReference type="ChEBI" id="CHEBI:29991"/>
        <dbReference type="ChEBI" id="CHEBI:30616"/>
        <dbReference type="ChEBI" id="CHEBI:43474"/>
        <dbReference type="ChEBI" id="CHEBI:58443"/>
        <dbReference type="ChEBI" id="CHEBI:77657"/>
        <dbReference type="ChEBI" id="CHEBI:456216"/>
        <dbReference type="EC" id="6.3.2.6"/>
    </reaction>
</comment>
<comment type="pathway">
    <text evidence="1">Purine metabolism; IMP biosynthesis via de novo pathway; 5-amino-1-(5-phospho-D-ribosyl)imidazole-4-carboxamide from 5-amino-1-(5-phospho-D-ribosyl)imidazole-4-carboxylate: step 1/2.</text>
</comment>
<comment type="similarity">
    <text evidence="1">Belongs to the SAICAR synthetase family.</text>
</comment>
<evidence type="ECO:0000255" key="1">
    <source>
        <dbReference type="HAMAP-Rule" id="MF_00137"/>
    </source>
</evidence>
<feature type="chain" id="PRO_1000203241" description="Phosphoribosylaminoimidazole-succinocarboxamide synthase">
    <location>
        <begin position="1"/>
        <end position="236"/>
    </location>
</feature>
<sequence>MSNQLIYSGKAKDIYETADDEIVLISYKDQVTMLNGAHKEMIEGKGSLNNQISALIFDRLNRVGVSTHFIKQLSETEQLNKRVAIIPLEVVLRNVAAGSFSKRFGVKEGQALDEPIIELYYKNDALDDPFINDEHVSFLKLATDEQIAYIKQETHRINAYLKEWFASVGLTLVDFKLEFGFDKEGMLILADEFSPDNCRLWDNAGRHMDKDVFRRQLGSLTQAYETVLERLRALDQ</sequence>
<proteinExistence type="inferred from homology"/>
<name>PUR7_STRS7</name>
<reference key="1">
    <citation type="journal article" date="2009" name="PLoS Pathog.">
        <title>Genomic evidence for the evolution of Streptococcus equi: host restriction, increased virulence, and genetic exchange with human pathogens.</title>
        <authorList>
            <person name="Holden M.T.G."/>
            <person name="Heather Z."/>
            <person name="Paillot R."/>
            <person name="Steward K.F."/>
            <person name="Webb K."/>
            <person name="Ainslie F."/>
            <person name="Jourdan T."/>
            <person name="Bason N.C."/>
            <person name="Holroyd N.E."/>
            <person name="Mungall K."/>
            <person name="Quail M.A."/>
            <person name="Sanders M."/>
            <person name="Simmonds M."/>
            <person name="Willey D."/>
            <person name="Brooks K."/>
            <person name="Aanensen D.M."/>
            <person name="Spratt B.G."/>
            <person name="Jolley K.A."/>
            <person name="Maiden M.C.J."/>
            <person name="Kehoe M."/>
            <person name="Chanter N."/>
            <person name="Bentley S.D."/>
            <person name="Robinson C."/>
            <person name="Maskell D.J."/>
            <person name="Parkhill J."/>
            <person name="Waller A.S."/>
        </authorList>
    </citation>
    <scope>NUCLEOTIDE SEQUENCE [LARGE SCALE GENOMIC DNA]</scope>
    <source>
        <strain>H70</strain>
    </source>
</reference>
<accession>C0MCA1</accession>
<dbReference type="EC" id="6.3.2.6" evidence="1"/>
<dbReference type="EMBL" id="FM204884">
    <property type="protein sequence ID" value="CAW97597.1"/>
    <property type="molecule type" value="Genomic_DNA"/>
</dbReference>
<dbReference type="SMR" id="C0MCA1"/>
<dbReference type="KEGG" id="seq:SZO_00250"/>
<dbReference type="PATRIC" id="fig|40041.11.peg.24"/>
<dbReference type="eggNOG" id="COG0152">
    <property type="taxonomic scope" value="Bacteria"/>
</dbReference>
<dbReference type="HOGENOM" id="CLU_061495_2_0_9"/>
<dbReference type="UniPathway" id="UPA00074">
    <property type="reaction ID" value="UER00131"/>
</dbReference>
<dbReference type="Proteomes" id="UP000001368">
    <property type="component" value="Chromosome"/>
</dbReference>
<dbReference type="GO" id="GO:0005524">
    <property type="term" value="F:ATP binding"/>
    <property type="evidence" value="ECO:0007669"/>
    <property type="project" value="UniProtKB-KW"/>
</dbReference>
<dbReference type="GO" id="GO:0004639">
    <property type="term" value="F:phosphoribosylaminoimidazolesuccinocarboxamide synthase activity"/>
    <property type="evidence" value="ECO:0007669"/>
    <property type="project" value="UniProtKB-UniRule"/>
</dbReference>
<dbReference type="GO" id="GO:0006189">
    <property type="term" value="P:'de novo' IMP biosynthetic process"/>
    <property type="evidence" value="ECO:0007669"/>
    <property type="project" value="UniProtKB-UniRule"/>
</dbReference>
<dbReference type="GO" id="GO:0009236">
    <property type="term" value="P:cobalamin biosynthetic process"/>
    <property type="evidence" value="ECO:0007669"/>
    <property type="project" value="InterPro"/>
</dbReference>
<dbReference type="CDD" id="cd01415">
    <property type="entry name" value="SAICAR_synt_PurC"/>
    <property type="match status" value="1"/>
</dbReference>
<dbReference type="FunFam" id="3.30.470.20:FF:000006">
    <property type="entry name" value="Phosphoribosylaminoimidazole-succinocarboxamide synthase"/>
    <property type="match status" value="1"/>
</dbReference>
<dbReference type="Gene3D" id="3.30.470.20">
    <property type="entry name" value="ATP-grasp fold, B domain"/>
    <property type="match status" value="1"/>
</dbReference>
<dbReference type="Gene3D" id="3.30.200.20">
    <property type="entry name" value="Phosphorylase Kinase, domain 1"/>
    <property type="match status" value="1"/>
</dbReference>
<dbReference type="HAMAP" id="MF_00137">
    <property type="entry name" value="SAICAR_synth"/>
    <property type="match status" value="1"/>
</dbReference>
<dbReference type="InterPro" id="IPR028923">
    <property type="entry name" value="SAICAR_synt/ADE2_N"/>
</dbReference>
<dbReference type="InterPro" id="IPR033934">
    <property type="entry name" value="SAICAR_synt_PurC"/>
</dbReference>
<dbReference type="InterPro" id="IPR001636">
    <property type="entry name" value="SAICAR_synth"/>
</dbReference>
<dbReference type="InterPro" id="IPR050089">
    <property type="entry name" value="SAICAR_synthetase"/>
</dbReference>
<dbReference type="InterPro" id="IPR018236">
    <property type="entry name" value="SAICAR_synthetase_CS"/>
</dbReference>
<dbReference type="NCBIfam" id="TIGR00081">
    <property type="entry name" value="purC"/>
    <property type="match status" value="1"/>
</dbReference>
<dbReference type="PANTHER" id="PTHR43599">
    <property type="entry name" value="MULTIFUNCTIONAL PROTEIN ADE2"/>
    <property type="match status" value="1"/>
</dbReference>
<dbReference type="PANTHER" id="PTHR43599:SF3">
    <property type="entry name" value="SI:DKEY-6E2.2"/>
    <property type="match status" value="1"/>
</dbReference>
<dbReference type="Pfam" id="PF01259">
    <property type="entry name" value="SAICAR_synt"/>
    <property type="match status" value="1"/>
</dbReference>
<dbReference type="SUPFAM" id="SSF56104">
    <property type="entry name" value="SAICAR synthase-like"/>
    <property type="match status" value="1"/>
</dbReference>
<dbReference type="PROSITE" id="PS01057">
    <property type="entry name" value="SAICAR_SYNTHETASE_1"/>
    <property type="match status" value="1"/>
</dbReference>
<dbReference type="PROSITE" id="PS01058">
    <property type="entry name" value="SAICAR_SYNTHETASE_2"/>
    <property type="match status" value="1"/>
</dbReference>
<protein>
    <recommendedName>
        <fullName evidence="1">Phosphoribosylaminoimidazole-succinocarboxamide synthase</fullName>
        <ecNumber evidence="1">6.3.2.6</ecNumber>
    </recommendedName>
    <alternativeName>
        <fullName evidence="1">SAICAR synthetase</fullName>
    </alternativeName>
</protein>
<gene>
    <name evidence="1" type="primary">purC</name>
    <name type="ordered locus">SZO_00250</name>
</gene>